<sequence>ADTIVAVELDSYPNTDIGDPNYPHIGIDIKSIRSKSTARWNMQTGKVGTVHISYNSVAKRLSAVVSYTGSSSTTVSYDVDLNNVLPEWVRVGLSATTGLYKETNTILSWSFTSKLKTNSIADANSLHFTFNQFSQNPKDLILQGDATTDSDGNLELTKVSSSGDPQGNSVGRALFYAPVHIWEKSAVVASFDATFTFLIKSPDRDPADGITFFIANPDTSIPSGSGGRLLGLFPDAN</sequence>
<accession>P58908</accession>
<accession>P85306</accession>
<reference key="1">
    <citation type="journal article" date="2008" name="J. Struct. Biol.">
        <title>Crystal structure of Dioclea rostrata lectin: insights into understanding the pH-dependent dimer-tetramer equilibrium and the structural basis for carbohydrate recognition in Diocleinae lectins.</title>
        <authorList>
            <person name="de Oliveira T.M."/>
            <person name="Delatorre P."/>
            <person name="da Rocha B.A.M."/>
            <person name="de Souza E.P."/>
            <person name="Nascimento K.S."/>
            <person name="Bezerra G.A."/>
            <person name="Moura T.R."/>
            <person name="Benevides R.G."/>
            <person name="Bezerra E.H.S."/>
            <person name="Moreno F.B.M.B."/>
            <person name="Freire V.N."/>
            <person name="de Azevedo W.F. Jr."/>
            <person name="Cavada B.S."/>
        </authorList>
    </citation>
    <scope>PROTEIN SEQUENCE</scope>
    <scope>FUNCTION</scope>
    <scope>SUBUNIT</scope>
    <scope>SUBCELLULAR LOCATION</scope>
    <scope>MASS SPECTROMETRY</scope>
    <scope>X-RAY CRYSTALLOGRAPHY (2.0 ANGSTROMS)</scope>
    <source>
        <tissue>Seed</tissue>
    </source>
</reference>
<reference key="2">
    <citation type="journal article" date="1999" name="Biochim. Biophys. Acta">
        <title>Molecular characterization and crystallization of Diocleinae lectins.</title>
        <authorList>
            <person name="Calvete J.J."/>
            <person name="Thole H.H."/>
            <person name="Raida M."/>
            <person name="Urbanke C."/>
            <person name="Romero A."/>
            <person name="Grangeiro T.B."/>
            <person name="Ramos M.V."/>
            <person name="Almeida da Rocha I.M."/>
            <person name="Guimaraes F.N."/>
            <person name="Cavada B.S."/>
        </authorList>
    </citation>
    <scope>PROTEIN SEQUENCE OF 1-25 AND 119-142</scope>
    <scope>SUBUNIT</scope>
    <scope>MASS SPECTROMETRY</scope>
    <source>
        <tissue>Seed</tissue>
    </source>
</reference>
<reference key="3">
    <citation type="journal article" date="1992" name="Immunol. Invest.">
        <title>Human lymphocyte stimulation by legume lectins from the Diocleae tribe.</title>
        <authorList>
            <person name="Barral-Netto M."/>
            <person name="Santos S.B."/>
            <person name="Barral A."/>
            <person name="Moreira L.I."/>
            <person name="Santos C.F."/>
            <person name="Moreira R.A."/>
            <person name="Oliveira J.T."/>
            <person name="Cavada B.S."/>
        </authorList>
    </citation>
    <scope>FUNCTION</scope>
</reference>
<reference key="4">
    <citation type="journal article" date="1994" name="Agents Actions">
        <title>Histamine release induced by glucose (mannose)-specific lectins isolated from Brazilian beans. Comparison with concanavalin A.</title>
        <authorList>
            <person name="Gomes J.C."/>
            <person name="Ferreira R.R."/>
            <person name="Cavada B.S."/>
            <person name="Moreira R.A."/>
            <person name="Oliveira J.T."/>
        </authorList>
    </citation>
    <scope>FUNCTION</scope>
    <scope>CALCIUM-BINDING</scope>
</reference>
<reference key="5">
    <citation type="journal article" date="1996" name="Inflamm. Res.">
        <title>Characteristics of the histamine release from hamster cheek pouch mast cells stimulated by lectins from Brazilian beans and concanavalin A.</title>
        <authorList>
            <person name="Ferreira R.R."/>
            <person name="Cavada B.S."/>
            <person name="Moreira R.A."/>
            <person name="Oliveira J.T."/>
            <person name="Gomes J.C."/>
        </authorList>
    </citation>
    <scope>FUNCTION</scope>
    <scope>CALCIUM-BINDING</scope>
</reference>
<reference key="6">
    <citation type="journal article" date="1998" name="J. Biol. Chem.">
        <title>Diocleinae lectins are a group of proteins with conserved binding sites for the core trimannoside of asparagine-linked oligosaccharides and differential specificities for complex carbohydrates.</title>
        <authorList>
            <person name="Dam T.K."/>
            <person name="Cavada B.S."/>
            <person name="Grangeiro T.B."/>
            <person name="Santos C.F."/>
            <person name="de Sousa F.A.M."/>
            <person name="Oscarson S."/>
            <person name="Brewer C.F."/>
        </authorList>
    </citation>
    <scope>FUNCTION</scope>
</reference>
<reference key="7">
    <citation type="journal article" date="2000" name="Biochemistry">
        <title>Demonstration of a conserved histidine and two water ligands at the Mn2+ site in Diocleinae lectins by pulsed EPR spectroscopy.</title>
        <authorList>
            <person name="Lee H.C."/>
            <person name="Goroncy A.K."/>
            <person name="Peisach J."/>
            <person name="Cavada B.S."/>
            <person name="Grangeiro T.B."/>
            <person name="Ramos M.V."/>
            <person name="Sampaio A.H."/>
            <person name="Dam T.K."/>
            <person name="Brewer C.F."/>
        </authorList>
    </citation>
    <scope>MANGANESE-BINDING</scope>
</reference>
<reference key="8">
    <citation type="journal article" date="2000" name="J. Biol. Chem.">
        <title>Thermodynamic binding studies of lectins from the diocleinae subtribe to deoxy analogs of the core trimannoside of asparagine-linked oligosaccharides.</title>
        <authorList>
            <person name="Dam T.K."/>
            <person name="Cavada B.S."/>
            <person name="Grangeiro T.B."/>
            <person name="Santos C.F."/>
            <person name="Ceccatto V.M."/>
            <person name="de Sousa F.A."/>
            <person name="Oscarson S."/>
            <person name="Brewer C.F."/>
        </authorList>
    </citation>
    <scope>FUNCTION</scope>
</reference>
<name>LECA_MACBI</name>
<feature type="chain" id="PRO_0000017604" description="Lectin alpha chain">
    <location>
        <begin position="1"/>
        <end position="237"/>
    </location>
</feature>
<feature type="chain" id="PRO_0000017605" description="Lectin beta chain">
    <location>
        <begin position="1"/>
        <end position="118"/>
    </location>
</feature>
<feature type="chain" id="PRO_0000017606" description="Lectin gamma-1 chain">
    <location>
        <begin position="119"/>
        <end position="237"/>
    </location>
</feature>
<feature type="chain" id="PRO_0000017607" description="Lectin gamma-2 chain">
    <location>
        <begin position="125"/>
        <end position="237"/>
    </location>
</feature>
<feature type="binding site">
    <location>
        <position position="8"/>
    </location>
    <ligand>
        <name>Mn(2+)</name>
        <dbReference type="ChEBI" id="CHEBI:29035"/>
    </ligand>
</feature>
<feature type="binding site">
    <location>
        <position position="10"/>
    </location>
    <ligand>
        <name>Ca(2+)</name>
        <dbReference type="ChEBI" id="CHEBI:29108"/>
    </ligand>
</feature>
<feature type="binding site">
    <location>
        <position position="10"/>
    </location>
    <ligand>
        <name>Mn(2+)</name>
        <dbReference type="ChEBI" id="CHEBI:29035"/>
    </ligand>
</feature>
<feature type="binding site" evidence="1">
    <location>
        <position position="12"/>
    </location>
    <ligand>
        <name>a carbohydrate</name>
        <dbReference type="ChEBI" id="CHEBI:16646"/>
    </ligand>
</feature>
<feature type="binding site">
    <location>
        <position position="12"/>
    </location>
    <ligand>
        <name>Ca(2+)</name>
        <dbReference type="ChEBI" id="CHEBI:29108"/>
    </ligand>
</feature>
<feature type="binding site">
    <location>
        <position position="14"/>
    </location>
    <ligand>
        <name>Ca(2+)</name>
        <dbReference type="ChEBI" id="CHEBI:29108"/>
    </ligand>
</feature>
<feature type="binding site">
    <location>
        <position position="19"/>
    </location>
    <ligand>
        <name>Ca(2+)</name>
        <dbReference type="ChEBI" id="CHEBI:29108"/>
    </ligand>
</feature>
<feature type="binding site">
    <location>
        <position position="19"/>
    </location>
    <ligand>
        <name>Mn(2+)</name>
        <dbReference type="ChEBI" id="CHEBI:29035"/>
    </ligand>
</feature>
<feature type="binding site">
    <location>
        <position position="24"/>
    </location>
    <ligand>
        <name>Mn(2+)</name>
        <dbReference type="ChEBI" id="CHEBI:29035"/>
    </ligand>
</feature>
<feature type="binding site" evidence="1">
    <location>
        <position position="34"/>
    </location>
    <ligand>
        <name>Mn(2+)</name>
        <dbReference type="ChEBI" id="CHEBI:29035"/>
    </ligand>
</feature>
<feature type="binding site" evidence="1">
    <location>
        <begin position="99"/>
        <end position="100"/>
    </location>
    <ligand>
        <name>a carbohydrate</name>
        <dbReference type="ChEBI" id="CHEBI:16646"/>
    </ligand>
</feature>
<feature type="binding site">
    <location>
        <position position="208"/>
    </location>
    <ligand>
        <name>Ca(2+)</name>
        <dbReference type="ChEBI" id="CHEBI:29108"/>
    </ligand>
</feature>
<feature type="binding site" evidence="1">
    <location>
        <position position="228"/>
    </location>
    <ligand>
        <name>a carbohydrate</name>
        <dbReference type="ChEBI" id="CHEBI:16646"/>
    </ligand>
</feature>
<feature type="strand" evidence="10">
    <location>
        <begin position="4"/>
        <end position="10"/>
    </location>
</feature>
<feature type="helix" evidence="10">
    <location>
        <begin position="15"/>
        <end position="17"/>
    </location>
</feature>
<feature type="strand" evidence="10">
    <location>
        <begin position="24"/>
        <end position="33"/>
    </location>
</feature>
<feature type="strand" evidence="10">
    <location>
        <begin position="35"/>
        <end position="39"/>
    </location>
</feature>
<feature type="strand" evidence="10">
    <location>
        <begin position="46"/>
        <end position="55"/>
    </location>
</feature>
<feature type="turn" evidence="10">
    <location>
        <begin position="56"/>
        <end position="59"/>
    </location>
</feature>
<feature type="strand" evidence="10">
    <location>
        <begin position="60"/>
        <end position="67"/>
    </location>
</feature>
<feature type="strand" evidence="10">
    <location>
        <begin position="73"/>
        <end position="78"/>
    </location>
</feature>
<feature type="helix" evidence="10">
    <location>
        <begin position="81"/>
        <end position="83"/>
    </location>
</feature>
<feature type="strand" evidence="10">
    <location>
        <begin position="87"/>
        <end position="96"/>
    </location>
</feature>
<feature type="strand" evidence="10">
    <location>
        <begin position="105"/>
        <end position="116"/>
    </location>
</feature>
<feature type="strand" evidence="10">
    <location>
        <begin position="124"/>
        <end position="132"/>
    </location>
</feature>
<feature type="strand" evidence="10">
    <location>
        <begin position="140"/>
        <end position="144"/>
    </location>
</feature>
<feature type="strand" evidence="10">
    <location>
        <begin position="154"/>
        <end position="157"/>
    </location>
</feature>
<feature type="strand" evidence="10">
    <location>
        <begin position="170"/>
        <end position="177"/>
    </location>
</feature>
<feature type="strand" evidence="10">
    <location>
        <begin position="187"/>
        <end position="198"/>
    </location>
</feature>
<feature type="strand" evidence="10">
    <location>
        <begin position="202"/>
        <end position="205"/>
    </location>
</feature>
<feature type="strand" evidence="10">
    <location>
        <begin position="209"/>
        <end position="215"/>
    </location>
</feature>
<feature type="helix" evidence="10">
    <location>
        <begin position="227"/>
        <end position="229"/>
    </location>
</feature>
<feature type="turn" evidence="10">
    <location>
        <begin position="230"/>
        <end position="232"/>
    </location>
</feature>
<evidence type="ECO:0000250" key="1"/>
<evidence type="ECO:0000269" key="2">
    <source>
    </source>
</evidence>
<evidence type="ECO:0000269" key="3">
    <source>
    </source>
</evidence>
<evidence type="ECO:0000269" key="4">
    <source>
    </source>
</evidence>
<evidence type="ECO:0000269" key="5">
    <source>
    </source>
</evidence>
<evidence type="ECO:0000269" key="6">
    <source>
    </source>
</evidence>
<evidence type="ECO:0000269" key="7">
    <source>
    </source>
</evidence>
<evidence type="ECO:0000269" key="8">
    <source>
    </source>
</evidence>
<evidence type="ECO:0000305" key="9"/>
<evidence type="ECO:0007829" key="10">
    <source>
        <dbReference type="PDB" id="2ZBJ"/>
    </source>
</evidence>
<organism>
    <name type="scientific">Macropsychanthus bicolor</name>
    <name type="common">Dioclea rostrata</name>
    <dbReference type="NCBI Taxonomy" id="232299"/>
    <lineage>
        <taxon>Eukaryota</taxon>
        <taxon>Viridiplantae</taxon>
        <taxon>Streptophyta</taxon>
        <taxon>Embryophyta</taxon>
        <taxon>Tracheophyta</taxon>
        <taxon>Spermatophyta</taxon>
        <taxon>Magnoliopsida</taxon>
        <taxon>eudicotyledons</taxon>
        <taxon>Gunneridae</taxon>
        <taxon>Pentapetalae</taxon>
        <taxon>rosids</taxon>
        <taxon>fabids</taxon>
        <taxon>Fabales</taxon>
        <taxon>Fabaceae</taxon>
        <taxon>Papilionoideae</taxon>
        <taxon>50 kb inversion clade</taxon>
        <taxon>NPAAA clade</taxon>
        <taxon>indigoferoid/millettioid clade</taxon>
        <taxon>Phaseoleae</taxon>
        <taxon>Macropsychanthus</taxon>
    </lineage>
</organism>
<comment type="function">
    <text evidence="3 4 5 6 7 8">D-mannose/D-glucose-binding lectin. Induces histamine release in mast cells from hamster and rat. Induces lymphocyte proliferation and IFNG production.</text>
</comment>
<comment type="subunit">
    <text evidence="2 5">Equilibrium between homodimer and homotetramer. Oligomerization is pH-dependent with homotetramers forming at pH 6.5 and above.</text>
</comment>
<comment type="subcellular location">
    <subcellularLocation>
        <location evidence="5">Vacuole</location>
        <location evidence="5">Aleurone grain</location>
    </subcellularLocation>
    <subcellularLocation>
        <location evidence="5">Vacuole</location>
    </subcellularLocation>
    <text>Cotyledonary membrane-bound vacuolar protein bodies.</text>
</comment>
<comment type="tissue specificity">
    <text>Seed.</text>
</comment>
<comment type="PTM">
    <text>The beta and gamma chains are produced by partial proteolytic processing of the lectin alpha chain by an asparaginyl endopeptidase. Mixture of 60% alpha lectin and 40% of its beta and gamma proteolytic fragments.</text>
</comment>
<comment type="mass spectrometry">
    <molecule>Lectin alpha chain</molecule>
</comment>
<comment type="mass spectrometry">
    <molecule>Lectin alpha chain</molecule>
</comment>
<comment type="mass spectrometry">
    <molecule>Lectin beta chain</molecule>
</comment>
<comment type="mass spectrometry">
    <molecule>Lectin gamma-1 chain</molecule>
    <text>Gamma chain isolectin.</text>
</comment>
<comment type="mass spectrometry">
    <molecule>Lectin gamma-2 chain</molecule>
    <text>Gamma chain isolectin.</text>
</comment>
<comment type="mass spectrometry">
    <molecule>Lectin gamma-2 chain</molecule>
    <text>Gamma chain isolectin.</text>
</comment>
<comment type="miscellaneous">
    <text>Binds one manganese (or another transition metal) ion and one calcium ion. The metal ions are essential for the saccharide-binding and cell-agglutinating activities.</text>
</comment>
<comment type="similarity">
    <text evidence="9">Belongs to the leguminous lectin family.</text>
</comment>
<dbReference type="PDB" id="2ZBJ">
    <property type="method" value="X-ray"/>
    <property type="resolution" value="2.05 A"/>
    <property type="chains" value="A=1-237"/>
</dbReference>
<dbReference type="PDBsum" id="2ZBJ"/>
<dbReference type="SMR" id="P58908"/>
<dbReference type="UniLectin" id="P58908"/>
<dbReference type="EvolutionaryTrace" id="P58908"/>
<dbReference type="GO" id="GO:0033095">
    <property type="term" value="C:aleurone grain"/>
    <property type="evidence" value="ECO:0000314"/>
    <property type="project" value="UniProtKB"/>
</dbReference>
<dbReference type="GO" id="GO:0000325">
    <property type="term" value="C:plant-type vacuole"/>
    <property type="evidence" value="ECO:0000314"/>
    <property type="project" value="UniProtKB"/>
</dbReference>
<dbReference type="GO" id="GO:0030246">
    <property type="term" value="F:carbohydrate binding"/>
    <property type="evidence" value="ECO:0000314"/>
    <property type="project" value="UniProtKB"/>
</dbReference>
<dbReference type="GO" id="GO:0005537">
    <property type="term" value="F:D-mannose binding"/>
    <property type="evidence" value="ECO:0007669"/>
    <property type="project" value="UniProtKB-KW"/>
</dbReference>
<dbReference type="GO" id="GO:0046872">
    <property type="term" value="F:metal ion binding"/>
    <property type="evidence" value="ECO:0007669"/>
    <property type="project" value="UniProtKB-KW"/>
</dbReference>
<dbReference type="GO" id="GO:1903595">
    <property type="term" value="P:positive regulation of histamine secretion by mast cell"/>
    <property type="evidence" value="ECO:0000314"/>
    <property type="project" value="UniProtKB"/>
</dbReference>
<dbReference type="FunFam" id="2.60.120.200:FF:000227">
    <property type="entry name" value="Concanavalin-A"/>
    <property type="match status" value="1"/>
</dbReference>
<dbReference type="Gene3D" id="2.60.120.200">
    <property type="match status" value="1"/>
</dbReference>
<dbReference type="InterPro" id="IPR013320">
    <property type="entry name" value="ConA-like_dom_sf"/>
</dbReference>
<dbReference type="InterPro" id="IPR000985">
    <property type="entry name" value="Lectin_LegA_CS"/>
</dbReference>
<dbReference type="InterPro" id="IPR019825">
    <property type="entry name" value="Lectin_legB_Mn/Ca_BS"/>
</dbReference>
<dbReference type="InterPro" id="IPR001220">
    <property type="entry name" value="Legume_lectin_dom"/>
</dbReference>
<dbReference type="InterPro" id="IPR050258">
    <property type="entry name" value="Leguminous_Lectin"/>
</dbReference>
<dbReference type="PANTHER" id="PTHR32401">
    <property type="entry name" value="CONCANAVALIN A-LIKE LECTIN FAMILY PROTEIN"/>
    <property type="match status" value="1"/>
</dbReference>
<dbReference type="PANTHER" id="PTHR32401:SF47">
    <property type="entry name" value="LEGUME LECTIN DOMAIN-CONTAINING PROTEIN"/>
    <property type="match status" value="1"/>
</dbReference>
<dbReference type="Pfam" id="PF00139">
    <property type="entry name" value="Lectin_legB"/>
    <property type="match status" value="2"/>
</dbReference>
<dbReference type="SUPFAM" id="SSF49899">
    <property type="entry name" value="Concanavalin A-like lectins/glucanases"/>
    <property type="match status" value="1"/>
</dbReference>
<dbReference type="PROSITE" id="PS00308">
    <property type="entry name" value="LECTIN_LEGUME_ALPHA"/>
    <property type="match status" value="1"/>
</dbReference>
<dbReference type="PROSITE" id="PS00307">
    <property type="entry name" value="LECTIN_LEGUME_BETA"/>
    <property type="match status" value="1"/>
</dbReference>
<keyword id="KW-0002">3D-structure</keyword>
<keyword id="KW-0106">Calcium</keyword>
<keyword id="KW-0903">Direct protein sequencing</keyword>
<keyword id="KW-0430">Lectin</keyword>
<keyword id="KW-0464">Manganese</keyword>
<keyword id="KW-0465">Mannose-binding</keyword>
<keyword id="KW-0479">Metal-binding</keyword>
<keyword id="KW-0926">Vacuole</keyword>
<proteinExistence type="evidence at protein level"/>
<protein>
    <recommendedName>
        <fullName>Lectin alpha chain</fullName>
    </recommendedName>
    <component>
        <recommendedName>
            <fullName>Lectin beta chain</fullName>
        </recommendedName>
    </component>
    <component>
        <recommendedName>
            <fullName>Lectin gamma-1 chain</fullName>
        </recommendedName>
    </component>
    <component>
        <recommendedName>
            <fullName>Lectin gamma-2 chain</fullName>
        </recommendedName>
    </component>
</protein>